<organism>
    <name type="scientific">Lodderomyces elongisporus (strain ATCC 11503 / CBS 2605 / JCM 1781 / NBRC 1676 / NRRL YB-4239)</name>
    <name type="common">Yeast</name>
    <name type="synonym">Saccharomyces elongisporus</name>
    <dbReference type="NCBI Taxonomy" id="379508"/>
    <lineage>
        <taxon>Eukaryota</taxon>
        <taxon>Fungi</taxon>
        <taxon>Dikarya</taxon>
        <taxon>Ascomycota</taxon>
        <taxon>Saccharomycotina</taxon>
        <taxon>Pichiomycetes</taxon>
        <taxon>Debaryomycetaceae</taxon>
        <taxon>Candida/Lodderomyces clade</taxon>
        <taxon>Lodderomyces</taxon>
    </lineage>
</organism>
<keyword id="KW-0445">Lipid transport</keyword>
<keyword id="KW-0446">Lipid-binding</keyword>
<keyword id="KW-0472">Membrane</keyword>
<keyword id="KW-0496">Mitochondrion</keyword>
<keyword id="KW-1000">Mitochondrion outer membrane</keyword>
<keyword id="KW-1185">Reference proteome</keyword>
<keyword id="KW-0812">Transmembrane</keyword>
<keyword id="KW-1134">Transmembrane beta strand</keyword>
<keyword id="KW-0813">Transport</keyword>
<proteinExistence type="inferred from homology"/>
<feature type="chain" id="PRO_0000384346" description="Mitochondrial distribution and morphology protein 34">
    <location>
        <begin position="1"/>
        <end position="632"/>
    </location>
</feature>
<feature type="domain" description="SMP-LTD" evidence="1">
    <location>
        <begin position="1"/>
        <end position="203"/>
    </location>
</feature>
<feature type="region of interest" description="Disordered" evidence="2">
    <location>
        <begin position="221"/>
        <end position="253"/>
    </location>
</feature>
<feature type="region of interest" description="Disordered" evidence="2">
    <location>
        <begin position="384"/>
        <end position="435"/>
    </location>
</feature>
<feature type="compositionally biased region" description="Low complexity" evidence="2">
    <location>
        <begin position="224"/>
        <end position="252"/>
    </location>
</feature>
<feature type="compositionally biased region" description="Basic residues" evidence="2">
    <location>
        <begin position="384"/>
        <end position="400"/>
    </location>
</feature>
<feature type="compositionally biased region" description="Basic and acidic residues" evidence="2">
    <location>
        <begin position="401"/>
        <end position="412"/>
    </location>
</feature>
<feature type="compositionally biased region" description="Low complexity" evidence="2">
    <location>
        <begin position="422"/>
        <end position="435"/>
    </location>
</feature>
<dbReference type="EMBL" id="CH981524">
    <property type="protein sequence ID" value="EDK42873.1"/>
    <property type="molecule type" value="Genomic_DNA"/>
</dbReference>
<dbReference type="RefSeq" id="XP_001528531.1">
    <property type="nucleotide sequence ID" value="XM_001528481.1"/>
</dbReference>
<dbReference type="SMR" id="A5DUL5"/>
<dbReference type="STRING" id="379508.A5DUL5"/>
<dbReference type="GeneID" id="5234987"/>
<dbReference type="KEGG" id="lel:PVL30_001017"/>
<dbReference type="VEuPathDB" id="FungiDB:LELG_01051"/>
<dbReference type="eggNOG" id="ENOG502QT3W">
    <property type="taxonomic scope" value="Eukaryota"/>
</dbReference>
<dbReference type="HOGENOM" id="CLU_476594_0_0_1"/>
<dbReference type="InParanoid" id="A5DUL5"/>
<dbReference type="OMA" id="PPMIMEN"/>
<dbReference type="OrthoDB" id="17927at2759"/>
<dbReference type="Proteomes" id="UP000001996">
    <property type="component" value="Unassembled WGS sequence"/>
</dbReference>
<dbReference type="GO" id="GO:0032865">
    <property type="term" value="C:ERMES complex"/>
    <property type="evidence" value="ECO:0007669"/>
    <property type="project" value="UniProtKB-UniRule"/>
</dbReference>
<dbReference type="GO" id="GO:0008289">
    <property type="term" value="F:lipid binding"/>
    <property type="evidence" value="ECO:0007669"/>
    <property type="project" value="UniProtKB-KW"/>
</dbReference>
<dbReference type="GO" id="GO:0000002">
    <property type="term" value="P:mitochondrial genome maintenance"/>
    <property type="evidence" value="ECO:0007669"/>
    <property type="project" value="UniProtKB-UniRule"/>
</dbReference>
<dbReference type="GO" id="GO:1990456">
    <property type="term" value="P:mitochondrion-endoplasmic reticulum membrane tethering"/>
    <property type="evidence" value="ECO:0007669"/>
    <property type="project" value="TreeGrafter"/>
</dbReference>
<dbReference type="GO" id="GO:0015914">
    <property type="term" value="P:phospholipid transport"/>
    <property type="evidence" value="ECO:0007669"/>
    <property type="project" value="TreeGrafter"/>
</dbReference>
<dbReference type="CDD" id="cd21673">
    <property type="entry name" value="SMP_Mdm34"/>
    <property type="match status" value="1"/>
</dbReference>
<dbReference type="HAMAP" id="MF_03105">
    <property type="entry name" value="Mdm34"/>
    <property type="match status" value="1"/>
</dbReference>
<dbReference type="InterPro" id="IPR027536">
    <property type="entry name" value="Mdm34"/>
</dbReference>
<dbReference type="InterPro" id="IPR031468">
    <property type="entry name" value="SMP_LBD"/>
</dbReference>
<dbReference type="PANTHER" id="PTHR28185">
    <property type="entry name" value="MITOCHONDRIAL DISTRIBUTION AND MORPHOLOGY PROTEIN 34"/>
    <property type="match status" value="1"/>
</dbReference>
<dbReference type="PANTHER" id="PTHR28185:SF1">
    <property type="entry name" value="MITOCHONDRIAL DISTRIBUTION AND MORPHOLOGY PROTEIN 34"/>
    <property type="match status" value="1"/>
</dbReference>
<dbReference type="PROSITE" id="PS51847">
    <property type="entry name" value="SMP"/>
    <property type="match status" value="1"/>
</dbReference>
<reference key="1">
    <citation type="journal article" date="2009" name="Nature">
        <title>Evolution of pathogenicity and sexual reproduction in eight Candida genomes.</title>
        <authorList>
            <person name="Butler G."/>
            <person name="Rasmussen M.D."/>
            <person name="Lin M.F."/>
            <person name="Santos M.A.S."/>
            <person name="Sakthikumar S."/>
            <person name="Munro C.A."/>
            <person name="Rheinbay E."/>
            <person name="Grabherr M."/>
            <person name="Forche A."/>
            <person name="Reedy J.L."/>
            <person name="Agrafioti I."/>
            <person name="Arnaud M.B."/>
            <person name="Bates S."/>
            <person name="Brown A.J.P."/>
            <person name="Brunke S."/>
            <person name="Costanzo M.C."/>
            <person name="Fitzpatrick D.A."/>
            <person name="de Groot P.W.J."/>
            <person name="Harris D."/>
            <person name="Hoyer L.L."/>
            <person name="Hube B."/>
            <person name="Klis F.M."/>
            <person name="Kodira C."/>
            <person name="Lennard N."/>
            <person name="Logue M.E."/>
            <person name="Martin R."/>
            <person name="Neiman A.M."/>
            <person name="Nikolaou E."/>
            <person name="Quail M.A."/>
            <person name="Quinn J."/>
            <person name="Santos M.C."/>
            <person name="Schmitzberger F.F."/>
            <person name="Sherlock G."/>
            <person name="Shah P."/>
            <person name="Silverstein K.A.T."/>
            <person name="Skrzypek M.S."/>
            <person name="Soll D."/>
            <person name="Staggs R."/>
            <person name="Stansfield I."/>
            <person name="Stumpf M.P.H."/>
            <person name="Sudbery P.E."/>
            <person name="Srikantha T."/>
            <person name="Zeng Q."/>
            <person name="Berman J."/>
            <person name="Berriman M."/>
            <person name="Heitman J."/>
            <person name="Gow N.A.R."/>
            <person name="Lorenz M.C."/>
            <person name="Birren B.W."/>
            <person name="Kellis M."/>
            <person name="Cuomo C.A."/>
        </authorList>
    </citation>
    <scope>NUCLEOTIDE SEQUENCE [LARGE SCALE GENOMIC DNA]</scope>
    <source>
        <strain>ATCC 11503 / BCRC 21390 / CBS 2605 / JCM 1781 / NBRC 1676 / NRRL YB-4239</strain>
    </source>
</reference>
<comment type="function">
    <text evidence="1">Component of the ERMES/MDM complex, which serves as a molecular tether to connect the endoplasmic reticulum (ER) and mitochondria. Components of this complex are involved in the control of mitochondrial shape and protein biogenesis, and function in nonvesicular lipid trafficking between the ER and mitochondria. MDM34 is required for the interaction of the ER-resident membrane protein MMM1 and the outer mitochondrial membrane-resident beta-barrel protein MDM10.</text>
</comment>
<comment type="subunit">
    <text evidence="1">Component of the ER-mitochondria encounter structure (ERMES) or MDM complex, composed of MMM1, MDM10, MDM12 and MDM34.</text>
</comment>
<comment type="subcellular location">
    <subcellularLocation>
        <location evidence="1">Mitochondrion outer membrane</location>
        <topology evidence="1">Multi-pass membrane protein</topology>
    </subcellularLocation>
    <text evidence="1">The ERMES/MDM complex localizes to a few discrete foci (around 10 per single cell), that represent mitochondria-endoplasmic reticulum junctions. These foci are often found next to mtDNA nucleoids.</text>
</comment>
<comment type="domain">
    <text evidence="1">Lacks alpha-helical transmembrane segments, suggesting that it resides in the membrane via beta-sheet conformations similar to those predicted for other outer membrane proteins and porin.</text>
</comment>
<comment type="domain">
    <text evidence="1">The SMP-LTD domain is a barrel-like domain that can bind various types of glycerophospholipids in its interior and mediate their transfer between two adjacent bilayers.</text>
</comment>
<comment type="similarity">
    <text evidence="1">Belongs to the MDM34 family.</text>
</comment>
<accession>A5DUL5</accession>
<name>MDM34_LODEL</name>
<protein>
    <recommendedName>
        <fullName evidence="1">Mitochondrial distribution and morphology protein 34</fullName>
    </recommendedName>
</protein>
<evidence type="ECO:0000255" key="1">
    <source>
        <dbReference type="HAMAP-Rule" id="MF_03105"/>
    </source>
</evidence>
<evidence type="ECO:0000256" key="2">
    <source>
        <dbReference type="SAM" id="MobiDB-lite"/>
    </source>
</evidence>
<gene>
    <name evidence="1" type="primary">MDM34</name>
    <name type="ORF">LELG_01051</name>
</gene>
<sequence>MSFKVNWNSLETDSLSTWTKEILTNALNSGKSPHILASNISIKDLNFGQSAPDFEILEIGELDRDRFRGIFKISYSGDFHLTLHTKVQANPLNIYYSNSLEKEVGIEDSEFITPQFGLSNEQFAIPLDLKLSDIKISGIGIIVFSKSKGLTLVFRNDPLDSIKVSSTFDTVQVLANFLQKQIESQIRDLFRETLPTLIHQLSLKYLSLDNNMNELRTKLAANASTSSSSTSSTSSSTTSSSSSSSPSSFTSSLDSANTTTSLKMLENEEEDFSLVYSAKNLQKNLKLFKSRETMSLHIPRFRNIVQRTHLDKFTKNYPNLINSLALSNNELQKFTHHPHSHNAVPIDIFKNESFEKTDGLLKDISNIQAGNYYKFATQKENTVKPKRRVIRLGKSKNKSKSKTETKTEHNDENSNNDNQIVPLSSTPASSSSSTLIEEMVEEPSTPIMKETSEFINPATKTTPQTQIHHPTPRKLELRVQADPELHSEVSTDLHSRSSAHHALYQEFIRSTQSPSLYDKVLTTCGGVGLGNTGYFSFVPQRALSASPIKALNEELNEKKSMNHMDFNRVSQRLEEKLKQNNGDMLRKNNSMNSNSNSVDAEDKPQLVHHDTLSATAAAYAGLFTAPPPPYYH</sequence>